<name>ATPF_ANEMR</name>
<comment type="function">
    <text evidence="1">F(1)F(0) ATP synthase produces ATP from ADP in the presence of a proton or sodium gradient. F-type ATPases consist of two structural domains, F(1) containing the extramembraneous catalytic core and F(0) containing the membrane proton channel, linked together by a central stalk and a peripheral stalk. During catalysis, ATP synthesis in the catalytic domain of F(1) is coupled via a rotary mechanism of the central stalk subunits to proton translocation.</text>
</comment>
<comment type="function">
    <text evidence="1">Component of the F(0) channel, it forms part of the peripheral stalk, linking F(1) to F(0).</text>
</comment>
<comment type="subunit">
    <text evidence="1">F-type ATPases have 2 components, F(1) - the catalytic core - and F(0) - the membrane proton channel. F(1) has five subunits: alpha(3), beta(3), gamma(1), delta(1), epsilon(1). F(0) has four main subunits: a(1), b(1), b'(1) and c(10-14). The alpha and beta chains form an alternating ring which encloses part of the gamma chain. F(1) is attached to F(0) by a central stalk formed by the gamma and epsilon chains, while a peripheral stalk is formed by the delta, b and b' chains.</text>
</comment>
<comment type="subcellular location">
    <subcellularLocation>
        <location evidence="1">Plastid</location>
        <location evidence="1">Chloroplast thylakoid membrane</location>
        <topology evidence="1">Single-pass membrane protein</topology>
    </subcellularLocation>
</comment>
<comment type="miscellaneous">
    <text>In plastids the F-type ATPase is also known as CF(1)CF(0).</text>
</comment>
<comment type="similarity">
    <text evidence="1">Belongs to the ATPase B chain family.</text>
</comment>
<gene>
    <name evidence="1" type="primary">atpF</name>
</gene>
<accession>B0YPM4</accession>
<proteinExistence type="inferred from homology"/>
<protein>
    <recommendedName>
        <fullName evidence="1">ATP synthase subunit b, chloroplastic</fullName>
    </recommendedName>
    <alternativeName>
        <fullName evidence="1">ATP synthase F(0) sector subunit b</fullName>
    </alternativeName>
    <alternativeName>
        <fullName evidence="1">ATPase subunit I</fullName>
    </alternativeName>
</protein>
<keyword id="KW-0066">ATP synthesis</keyword>
<keyword id="KW-0138">CF(0)</keyword>
<keyword id="KW-0150">Chloroplast</keyword>
<keyword id="KW-0375">Hydrogen ion transport</keyword>
<keyword id="KW-0406">Ion transport</keyword>
<keyword id="KW-0472">Membrane</keyword>
<keyword id="KW-0934">Plastid</keyword>
<keyword id="KW-0793">Thylakoid</keyword>
<keyword id="KW-0812">Transmembrane</keyword>
<keyword id="KW-1133">Transmembrane helix</keyword>
<keyword id="KW-0813">Transport</keyword>
<sequence>MGNDIEFNVFQKCWTISNDFGLNTDLLETNLINLGIVISLLIYFGKGVLSNLLRNRKLAISNTIRDAEERYKEATQKLEQAKIRLEQAEMKARNIRTSGLSQMEKEKKDLIDGTNGDLRRLEDSKNATIRSEKQRAIEQVQQQVSRSALERTLETLKNCLDNELHLRMIDHNIGLLRAMESVTD</sequence>
<dbReference type="EMBL" id="EU043314">
    <property type="protein sequence ID" value="ABS54471.1"/>
    <property type="molecule type" value="Genomic_DNA"/>
</dbReference>
<dbReference type="RefSeq" id="YP_001687210.1">
    <property type="nucleotide sequence ID" value="NC_010359.1"/>
</dbReference>
<dbReference type="SMR" id="B0YPM4"/>
<dbReference type="GeneID" id="5952229"/>
<dbReference type="GO" id="GO:0009535">
    <property type="term" value="C:chloroplast thylakoid membrane"/>
    <property type="evidence" value="ECO:0007669"/>
    <property type="project" value="UniProtKB-SubCell"/>
</dbReference>
<dbReference type="GO" id="GO:0045259">
    <property type="term" value="C:proton-transporting ATP synthase complex"/>
    <property type="evidence" value="ECO:0007669"/>
    <property type="project" value="UniProtKB-KW"/>
</dbReference>
<dbReference type="GO" id="GO:0046933">
    <property type="term" value="F:proton-transporting ATP synthase activity, rotational mechanism"/>
    <property type="evidence" value="ECO:0007669"/>
    <property type="project" value="UniProtKB-UniRule"/>
</dbReference>
<dbReference type="CDD" id="cd06503">
    <property type="entry name" value="ATP-synt_Fo_b"/>
    <property type="match status" value="1"/>
</dbReference>
<dbReference type="HAMAP" id="MF_01398">
    <property type="entry name" value="ATP_synth_b_bprime"/>
    <property type="match status" value="1"/>
</dbReference>
<dbReference type="InterPro" id="IPR002146">
    <property type="entry name" value="ATP_synth_b/b'su_bac/chlpt"/>
</dbReference>
<dbReference type="NCBIfam" id="NF005606">
    <property type="entry name" value="PRK07352.1"/>
    <property type="match status" value="1"/>
</dbReference>
<dbReference type="PANTHER" id="PTHR34264">
    <property type="entry name" value="ATP SYNTHASE SUBUNIT B, CHLOROPLASTIC"/>
    <property type="match status" value="1"/>
</dbReference>
<dbReference type="PANTHER" id="PTHR34264:SF3">
    <property type="entry name" value="ATP SYNTHASE SUBUNIT B, CHLOROPLASTIC"/>
    <property type="match status" value="1"/>
</dbReference>
<dbReference type="Pfam" id="PF00430">
    <property type="entry name" value="ATP-synt_B"/>
    <property type="match status" value="1"/>
</dbReference>
<feature type="chain" id="PRO_0000368904" description="ATP synthase subunit b, chloroplastic">
    <location>
        <begin position="1"/>
        <end position="184"/>
    </location>
</feature>
<feature type="transmembrane region" description="Helical" evidence="1">
    <location>
        <begin position="31"/>
        <end position="53"/>
    </location>
</feature>
<organism>
    <name type="scientific">Aneura mirabilis</name>
    <name type="common">Parasitic liverwort</name>
    <name type="synonym">Cryptothallus mirabilis</name>
    <dbReference type="NCBI Taxonomy" id="280810"/>
    <lineage>
        <taxon>Eukaryota</taxon>
        <taxon>Viridiplantae</taxon>
        <taxon>Streptophyta</taxon>
        <taxon>Embryophyta</taxon>
        <taxon>Marchantiophyta</taxon>
        <taxon>Jungermanniopsida</taxon>
        <taxon>Metzgeriidae</taxon>
        <taxon>Metzgeriales</taxon>
        <taxon>Aneuraceae</taxon>
        <taxon>Aneura</taxon>
    </lineage>
</organism>
<reference key="1">
    <citation type="journal article" date="2008" name="Mol. Biol. Evol.">
        <title>Functional gene losses occur with minimal size reduction in the plastid genome of the parasitic liverwort Aneura mirabilis.</title>
        <authorList>
            <person name="Wickett N.J."/>
            <person name="Zhang Y."/>
            <person name="Hansen S.K."/>
            <person name="Roper J.M."/>
            <person name="Kuehl J.V."/>
            <person name="Plock S.A."/>
            <person name="Wolf P.G."/>
            <person name="dePamphilis C.W."/>
            <person name="Boore J.L."/>
            <person name="Goffinet B."/>
        </authorList>
    </citation>
    <scope>NUCLEOTIDE SEQUENCE [LARGE SCALE GENOMIC DNA]</scope>
</reference>
<geneLocation type="chloroplast"/>
<evidence type="ECO:0000255" key="1">
    <source>
        <dbReference type="HAMAP-Rule" id="MF_01398"/>
    </source>
</evidence>